<sequence length="615" mass="69473">MDMDRGFYRKVDVPDHAHYVIAFFVLIIGVVGVTGNALVMYAFLCNKKLRTPPNYFIMNLAVSDFLMAITQSPIFFINSLFKEWIFGETGCRMYAFCGALFGITSMINLLAISLDRYIVITKPPQAIRWVSGRRTMVVILLVWLYSLAWSLAPLLGWSSYIPEGLMTSCTWDYVTSTPANKGYTLMLCCFVFFIPLGIISYCYLCMFLAIRSAGREIERLGTQVRKSTLMQQQTIKTEWKLTKVAFVVIIVYVHSWSPYACVTLIAWAGYGSHLSPYSKAVPAVIAKASAIYNPFIYAIIHSKYRDTLAEHVPCLYFLRQPPRKVSMSRAQSECSFRDSMVSRQSSASKTKFHRVSSTSTADTQVWSDVELDPMNHEGQSLRTSHSLGVLGRSKEHRGPPAQQNRQTRSSDTLEQATVADWRPPLTALRCDRNFLPQPTHPPYKMAAATPLQATTVDNVTPEHWNKHPNNNHKNHNNRHNGNNNNEEHEYSGKGGRHCQNHPHHIDVKNSISNCKKTCEKDTFSKEPVPCNAADDVRFSPRSAHTIQHAMGTPFRYMPEGDIACQERLSTDRSQRGDPLPDSKSLNCTGDVPVSAQRCSFPHETSRNLEESFMAL</sequence>
<evidence type="ECO:0000250" key="1"/>
<evidence type="ECO:0000250" key="2">
    <source>
        <dbReference type="UniProtKB" id="Q9QXZ9"/>
    </source>
</evidence>
<evidence type="ECO:0000255" key="3"/>
<evidence type="ECO:0000255" key="4">
    <source>
        <dbReference type="PROSITE-ProRule" id="PRU00521"/>
    </source>
</evidence>
<evidence type="ECO:0000256" key="5">
    <source>
        <dbReference type="SAM" id="MobiDB-lite"/>
    </source>
</evidence>
<evidence type="ECO:0000269" key="6">
    <source>
    </source>
</evidence>
<evidence type="ECO:0000305" key="7"/>
<evidence type="ECO:0000312" key="8">
    <source>
        <dbReference type="EMBL" id="AAM95160.1"/>
    </source>
</evidence>
<feature type="chain" id="PRO_0000270991" description="Melanopsin-B">
    <location>
        <begin position="1"/>
        <end position="615"/>
    </location>
</feature>
<feature type="topological domain" description="Extracellular" evidence="3">
    <location>
        <begin position="1"/>
        <end position="19"/>
    </location>
</feature>
<feature type="transmembrane region" description="Helical; Name=1" evidence="3">
    <location>
        <begin position="20"/>
        <end position="40"/>
    </location>
</feature>
<feature type="topological domain" description="Cytoplasmic" evidence="3">
    <location>
        <begin position="41"/>
        <end position="56"/>
    </location>
</feature>
<feature type="transmembrane region" description="Helical; Name=2" evidence="3">
    <location>
        <begin position="57"/>
        <end position="77"/>
    </location>
</feature>
<feature type="topological domain" description="Extracellular" evidence="3">
    <location>
        <begin position="78"/>
        <end position="93"/>
    </location>
</feature>
<feature type="transmembrane region" description="Helical; Name=3" evidence="3">
    <location>
        <begin position="94"/>
        <end position="114"/>
    </location>
</feature>
<feature type="topological domain" description="Cytoplasmic" evidence="3">
    <location>
        <begin position="115"/>
        <end position="136"/>
    </location>
</feature>
<feature type="transmembrane region" description="Helical; Name=4" evidence="3">
    <location>
        <begin position="137"/>
        <end position="157"/>
    </location>
</feature>
<feature type="topological domain" description="Extracellular" evidence="3">
    <location>
        <begin position="158"/>
        <end position="189"/>
    </location>
</feature>
<feature type="transmembrane region" description="Helical; Name=5" evidence="3">
    <location>
        <begin position="190"/>
        <end position="210"/>
    </location>
</feature>
<feature type="topological domain" description="Cytoplasmic" evidence="3">
    <location>
        <begin position="211"/>
        <end position="244"/>
    </location>
</feature>
<feature type="transmembrane region" description="Helical; Name=6" evidence="3">
    <location>
        <begin position="245"/>
        <end position="265"/>
    </location>
</feature>
<feature type="topological domain" description="Extracellular" evidence="3">
    <location>
        <begin position="266"/>
        <end position="279"/>
    </location>
</feature>
<feature type="transmembrane region" description="Helical; Name=7" evidence="3">
    <location>
        <begin position="280"/>
        <end position="300"/>
    </location>
</feature>
<feature type="topological domain" description="Cytoplasmic" evidence="3">
    <location>
        <begin position="301"/>
        <end position="615"/>
    </location>
</feature>
<feature type="region of interest" description="Disordered" evidence="5">
    <location>
        <begin position="390"/>
        <end position="420"/>
    </location>
</feature>
<feature type="region of interest" description="Disordered" evidence="5">
    <location>
        <begin position="465"/>
        <end position="502"/>
    </location>
</feature>
<feature type="compositionally biased region" description="Polar residues" evidence="5">
    <location>
        <begin position="401"/>
        <end position="415"/>
    </location>
</feature>
<feature type="compositionally biased region" description="Basic residues" evidence="5">
    <location>
        <begin position="469"/>
        <end position="478"/>
    </location>
</feature>
<feature type="modified residue" description="N6-(retinylidene)lysine" evidence="1">
    <location>
        <position position="287"/>
    </location>
</feature>
<feature type="disulfide bond" evidence="4">
    <location>
        <begin position="91"/>
        <end position="169"/>
    </location>
</feature>
<dbReference type="EMBL" id="AY126448">
    <property type="protein sequence ID" value="AAM95160.1"/>
    <property type="molecule type" value="mRNA"/>
</dbReference>
<dbReference type="SMR" id="Q804Q2"/>
<dbReference type="STRING" id="8049.ENSGMOP00000015127"/>
<dbReference type="Proteomes" id="UP000694546">
    <property type="component" value="Unplaced"/>
</dbReference>
<dbReference type="GO" id="GO:0005886">
    <property type="term" value="C:plasma membrane"/>
    <property type="evidence" value="ECO:0000250"/>
    <property type="project" value="UniProtKB"/>
</dbReference>
<dbReference type="GO" id="GO:0004930">
    <property type="term" value="F:G protein-coupled receptor activity"/>
    <property type="evidence" value="ECO:0007669"/>
    <property type="project" value="UniProtKB-KW"/>
</dbReference>
<dbReference type="GO" id="GO:0009881">
    <property type="term" value="F:photoreceptor activity"/>
    <property type="evidence" value="ECO:0007669"/>
    <property type="project" value="UniProtKB-KW"/>
</dbReference>
<dbReference type="GO" id="GO:0007602">
    <property type="term" value="P:phototransduction"/>
    <property type="evidence" value="ECO:0007669"/>
    <property type="project" value="UniProtKB-KW"/>
</dbReference>
<dbReference type="GO" id="GO:0007601">
    <property type="term" value="P:visual perception"/>
    <property type="evidence" value="ECO:0007669"/>
    <property type="project" value="InterPro"/>
</dbReference>
<dbReference type="CDD" id="cd15336">
    <property type="entry name" value="7tmA_Melanopsin"/>
    <property type="match status" value="1"/>
</dbReference>
<dbReference type="FunFam" id="1.20.1070.10:FF:000044">
    <property type="entry name" value="Opsin, ultraviolet-sensitive"/>
    <property type="match status" value="1"/>
</dbReference>
<dbReference type="Gene3D" id="1.20.1070.10">
    <property type="entry name" value="Rhodopsin 7-helix transmembrane proteins"/>
    <property type="match status" value="1"/>
</dbReference>
<dbReference type="InterPro" id="IPR050125">
    <property type="entry name" value="GPCR_opsins"/>
</dbReference>
<dbReference type="InterPro" id="IPR000276">
    <property type="entry name" value="GPCR_Rhodpsn"/>
</dbReference>
<dbReference type="InterPro" id="IPR017452">
    <property type="entry name" value="GPCR_Rhodpsn_7TM"/>
</dbReference>
<dbReference type="InterPro" id="IPR001760">
    <property type="entry name" value="Opsin"/>
</dbReference>
<dbReference type="InterPro" id="IPR027430">
    <property type="entry name" value="Retinal_BS"/>
</dbReference>
<dbReference type="PANTHER" id="PTHR24240">
    <property type="entry name" value="OPSIN"/>
    <property type="match status" value="1"/>
</dbReference>
<dbReference type="Pfam" id="PF00001">
    <property type="entry name" value="7tm_1"/>
    <property type="match status" value="1"/>
</dbReference>
<dbReference type="PRINTS" id="PR00237">
    <property type="entry name" value="GPCRRHODOPSN"/>
</dbReference>
<dbReference type="PRINTS" id="PR00238">
    <property type="entry name" value="OPSIN"/>
</dbReference>
<dbReference type="SMART" id="SM01381">
    <property type="entry name" value="7TM_GPCR_Srsx"/>
    <property type="match status" value="1"/>
</dbReference>
<dbReference type="SUPFAM" id="SSF81321">
    <property type="entry name" value="Family A G protein-coupled receptor-like"/>
    <property type="match status" value="1"/>
</dbReference>
<dbReference type="PROSITE" id="PS00237">
    <property type="entry name" value="G_PROTEIN_RECEP_F1_1"/>
    <property type="match status" value="1"/>
</dbReference>
<dbReference type="PROSITE" id="PS50262">
    <property type="entry name" value="G_PROTEIN_RECEP_F1_2"/>
    <property type="match status" value="1"/>
</dbReference>
<dbReference type="PROSITE" id="PS00238">
    <property type="entry name" value="OPSIN"/>
    <property type="match status" value="1"/>
</dbReference>
<keyword id="KW-1003">Cell membrane</keyword>
<keyword id="KW-0157">Chromophore</keyword>
<keyword id="KW-1015">Disulfide bond</keyword>
<keyword id="KW-0297">G-protein coupled receptor</keyword>
<keyword id="KW-0472">Membrane</keyword>
<keyword id="KW-0600">Photoreceptor protein</keyword>
<keyword id="KW-0675">Receptor</keyword>
<keyword id="KW-1185">Reference proteome</keyword>
<keyword id="KW-0681">Retinal protein</keyword>
<keyword id="KW-0716">Sensory transduction</keyword>
<keyword id="KW-0807">Transducer</keyword>
<keyword id="KW-0812">Transmembrane</keyword>
<keyword id="KW-1133">Transmembrane helix</keyword>
<organism>
    <name type="scientific">Gadus morhua</name>
    <name type="common">Atlantic cod</name>
    <dbReference type="NCBI Taxonomy" id="8049"/>
    <lineage>
        <taxon>Eukaryota</taxon>
        <taxon>Metazoa</taxon>
        <taxon>Chordata</taxon>
        <taxon>Craniata</taxon>
        <taxon>Vertebrata</taxon>
        <taxon>Euteleostomi</taxon>
        <taxon>Actinopterygii</taxon>
        <taxon>Neopterygii</taxon>
        <taxon>Teleostei</taxon>
        <taxon>Neoteleostei</taxon>
        <taxon>Acanthomorphata</taxon>
        <taxon>Zeiogadaria</taxon>
        <taxon>Gadariae</taxon>
        <taxon>Gadiformes</taxon>
        <taxon>Gadoidei</taxon>
        <taxon>Gadidae</taxon>
        <taxon>Gadus</taxon>
    </lineage>
</organism>
<proteinExistence type="evidence at transcript level"/>
<name>OPN4B_GADMO</name>
<accession>Q804Q2</accession>
<gene>
    <name type="primary">opn4b</name>
</gene>
<comment type="function">
    <text evidence="2">Photoreceptor implicated in non-image-forming responses to light.</text>
</comment>
<comment type="subcellular location">
    <subcellularLocation>
        <location evidence="2">Cell membrane</location>
        <topology evidence="3">Multi-pass membrane protein</topology>
    </subcellularLocation>
</comment>
<comment type="tissue specificity">
    <text evidence="6">Expressed in the inner nuclear layer of the retina, possibly in amacrine and ganglion cells. Expressed in a subpopulation of neurons in the dorsal habenula.</text>
</comment>
<comment type="developmental stage">
    <text evidence="6">Expressed in horizontal cell layer of the retina at early larval stages declining to undetectable levels later in development.</text>
</comment>
<comment type="similarity">
    <text evidence="4">Belongs to the G-protein coupled receptor 1 family. Opsin subfamily.</text>
</comment>
<protein>
    <recommendedName>
        <fullName>Melanopsin-B</fullName>
    </recommendedName>
    <alternativeName>
        <fullName>Opsin-4B</fullName>
    </alternativeName>
</protein>
<reference evidence="7 8" key="1">
    <citation type="journal article" date="2003" name="J. Comp. Neurol.">
        <title>Isolation and characterization of two teleost melanopsin genes and their differential expression within the inner retina and brain.</title>
        <authorList>
            <person name="Drivenes O."/>
            <person name="Soviknes A.M."/>
            <person name="Ebbesson L.O."/>
            <person name="Fjose A."/>
            <person name="Seo H.C."/>
            <person name="Helvik J.V."/>
        </authorList>
    </citation>
    <scope>NUCLEOTIDE SEQUENCE [MRNA]</scope>
    <scope>TISSUE SPECIFICITY</scope>
    <scope>DEVELOPMENTAL STAGE</scope>
</reference>